<dbReference type="EC" id="1.3.1.36" evidence="2"/>
<dbReference type="EMBL" id="OQ591883">
    <property type="protein sequence ID" value="WKU61919.1"/>
    <property type="molecule type" value="mRNA"/>
</dbReference>
<dbReference type="UniPathway" id="UPA00310"/>
<reference evidence="6" key="1">
    <citation type="journal article" date="2024" name="Nat. Commun.">
        <title>De novo biosynthesis of antiarrhythmic alkaloid ajmaline.</title>
        <authorList>
            <person name="Guo J."/>
            <person name="Gao D."/>
            <person name="Lian J."/>
            <person name="Qu Y."/>
        </authorList>
    </citation>
    <scope>NUCLEOTIDE SEQUENCE [MRNA]</scope>
    <scope>FUNCTION</scope>
    <scope>BIOTECHNOLOGY</scope>
    <scope>TISSUE SPECIFICITY</scope>
    <scope>PATHWAY</scope>
</reference>
<organism>
    <name type="scientific">Rauvolfia serpentina</name>
    <name type="common">Serpentine wood</name>
    <name type="synonym">Ophioxylon serpentinum</name>
    <dbReference type="NCBI Taxonomy" id="4060"/>
    <lineage>
        <taxon>Eukaryota</taxon>
        <taxon>Viridiplantae</taxon>
        <taxon>Streptophyta</taxon>
        <taxon>Embryophyta</taxon>
        <taxon>Tracheophyta</taxon>
        <taxon>Spermatophyta</taxon>
        <taxon>Magnoliopsida</taxon>
        <taxon>eudicotyledons</taxon>
        <taxon>Gunneridae</taxon>
        <taxon>Pentapetalae</taxon>
        <taxon>asterids</taxon>
        <taxon>lamiids</taxon>
        <taxon>Gentianales</taxon>
        <taxon>Apocynaceae</taxon>
        <taxon>Rauvolfioideae</taxon>
        <taxon>Vinceae</taxon>
        <taxon>Rauvolfiinae</taxon>
        <taxon>Rauvolfia</taxon>
    </lineage>
</organism>
<keyword id="KW-0017">Alkaloid metabolism</keyword>
<keyword id="KW-0479">Metal-binding</keyword>
<keyword id="KW-0521">NADP</keyword>
<keyword id="KW-0560">Oxidoreductase</keyword>
<keyword id="KW-0862">Zinc</keyword>
<proteinExistence type="evidence at protein level"/>
<evidence type="ECO:0000250" key="1">
    <source>
        <dbReference type="UniProtKB" id="P06525"/>
    </source>
</evidence>
<evidence type="ECO:0000250" key="2">
    <source>
        <dbReference type="UniProtKB" id="W8JWW7"/>
    </source>
</evidence>
<evidence type="ECO:0000269" key="3">
    <source>
    </source>
</evidence>
<evidence type="ECO:0000303" key="4">
    <source>
    </source>
</evidence>
<evidence type="ECO:0000305" key="5"/>
<evidence type="ECO:0000312" key="6">
    <source>
        <dbReference type="EMBL" id="WKU61919.1"/>
    </source>
</evidence>
<name>GS_RAUSE</name>
<comment type="function">
    <text evidence="2 3">Alcohol dehydrogenase involved in the biosynthesis of ajmaline-type monoterpenoid indole alkaloids (MIAs) natural products, important plant-derived pharmaceuticals used in the therapy of heart disorders (PubMed:38212296). Catalyzes iminium reduction on 4,21-dehydrogeissoschizine to produce 19E-geissoschizine, precursor of vomilenine, an intermediate chemical in the biosynthesis of ajmaline (By similarity).</text>
</comment>
<comment type="catalytic activity">
    <reaction evidence="2">
        <text>(19E)-geissoschizine + NADP(+) = 4,21-dehydrogeissoschizine + NADPH</text>
        <dbReference type="Rhea" id="RHEA:11376"/>
        <dbReference type="ChEBI" id="CHEBI:17037"/>
        <dbReference type="ChEBI" id="CHEBI:17294"/>
        <dbReference type="ChEBI" id="CHEBI:57783"/>
        <dbReference type="ChEBI" id="CHEBI:58349"/>
        <dbReference type="EC" id="1.3.1.36"/>
    </reaction>
    <physiologicalReaction direction="right-to-left" evidence="2">
        <dbReference type="Rhea" id="RHEA:11378"/>
    </physiologicalReaction>
</comment>
<comment type="cofactor">
    <cofactor evidence="1">
        <name>Zn(2+)</name>
        <dbReference type="ChEBI" id="CHEBI:29105"/>
    </cofactor>
    <text evidence="1">Binds 2 Zn(2+) ions per subunit.</text>
</comment>
<comment type="pathway">
    <text evidence="3">Alkaloid biosynthesis; ajmaline biosynthesis.</text>
</comment>
<comment type="subunit">
    <text evidence="1">Homodimer.</text>
</comment>
<comment type="tissue specificity">
    <text evidence="3">Mainly expressed in roots and, to a lower level, in leaves.</text>
</comment>
<comment type="biotechnology">
    <text evidence="3">The strictosidine aglycone-producing AJM7-DeltaHYS yeast strain expressing pathway genes of the VOM module, RsGS, SBE (GsSBE, RsSBE1 or RsSBE2), RsPNAE, RsVS and RsVH, accumulates vomilenine (PubMed:38212296). Additionnal expression of pathway genes of the AJM module, RsVR, RsDHVR, AAE (RsAAE1 or RsAAE2) and RsNNMT, leads to the production of ajmaline (PubMed:38212296). Ajmaline is an anti-arrhythmic alkaloid commercially used as an efficient drug for the treatment of arrhythmic heart disorder (PubMed:38212296).</text>
</comment>
<comment type="similarity">
    <text evidence="5">Belongs to the zinc-containing alcohol dehydrogenase family. Class-III subfamily.</text>
</comment>
<protein>
    <recommendedName>
        <fullName evidence="4">Geissoschizine synthase</fullName>
        <shortName evidence="4">RsGS</shortName>
        <ecNumber evidence="2">1.3.1.36</ecNumber>
    </recommendedName>
</protein>
<sequence>MAGETTQLDLSVKAVGWGAADASGTLQPIKFYRRTPGERDVKIRVLYCGVCNFDMEMVRNKWGFTRYPYVFGHETAGEVIEVGSKVQKFKVGDKVGVGCMVGSCGKCFNCQNGMENYCPEPNMADGSVYREQQGEPSFGGCSNVMVVDEKFVLRWPENLPQDTGVPLLCAGIVVYSPMKYMGLDKPGKHIGVIGLGGLGSIAVKFIKAFGGKATVISTSKRKEKEAIEEHGADAFVVNTDTEKLQALAGTMDGVVDTTPGGRTPMSLMLNLLKFDGVVLLVGAPETLFELPVQPLILGRRKIIGSSTGGLKEYQETLDFAAQHNIVCDTEVIGIDYLSTAMERIKNLDVKYRFAIDIGNTLKYED</sequence>
<feature type="chain" id="PRO_0000462311" description="Geissoschizine synthase">
    <location>
        <begin position="1"/>
        <end position="365"/>
    </location>
</feature>
<feature type="binding site" evidence="2">
    <location>
        <position position="51"/>
    </location>
    <ligand>
        <name>Zn(2+)</name>
        <dbReference type="ChEBI" id="CHEBI:29105"/>
        <label>1</label>
        <note>catalytic</note>
    </ligand>
</feature>
<feature type="binding site" evidence="2">
    <location>
        <position position="52"/>
    </location>
    <ligand>
        <name>NADP(+)</name>
        <dbReference type="ChEBI" id="CHEBI:58349"/>
    </ligand>
</feature>
<feature type="binding site" evidence="2">
    <location>
        <position position="73"/>
    </location>
    <ligand>
        <name>Zn(2+)</name>
        <dbReference type="ChEBI" id="CHEBI:29105"/>
        <label>1</label>
        <note>catalytic</note>
    </ligand>
</feature>
<feature type="binding site" evidence="2">
    <location>
        <position position="74"/>
    </location>
    <ligand>
        <name>Zn(2+)</name>
        <dbReference type="ChEBI" id="CHEBI:29105"/>
        <label>1</label>
        <note>catalytic</note>
    </ligand>
</feature>
<feature type="binding site" evidence="2">
    <location>
        <position position="104"/>
    </location>
    <ligand>
        <name>Zn(2+)</name>
        <dbReference type="ChEBI" id="CHEBI:29105"/>
        <label>2</label>
    </ligand>
</feature>
<feature type="binding site" evidence="2">
    <location>
        <position position="107"/>
    </location>
    <ligand>
        <name>Zn(2+)</name>
        <dbReference type="ChEBI" id="CHEBI:29105"/>
        <label>2</label>
    </ligand>
</feature>
<feature type="binding site" evidence="2">
    <location>
        <position position="110"/>
    </location>
    <ligand>
        <name>Zn(2+)</name>
        <dbReference type="ChEBI" id="CHEBI:29105"/>
        <label>2</label>
    </ligand>
</feature>
<feature type="binding site" evidence="2">
    <location>
        <position position="118"/>
    </location>
    <ligand>
        <name>Zn(2+)</name>
        <dbReference type="ChEBI" id="CHEBI:29105"/>
        <label>2</label>
    </ligand>
</feature>
<feature type="binding site" evidence="2">
    <location>
        <position position="169"/>
    </location>
    <ligand>
        <name>Zn(2+)</name>
        <dbReference type="ChEBI" id="CHEBI:29105"/>
        <label>1</label>
        <note>catalytic</note>
    </ligand>
</feature>
<feature type="binding site" evidence="2">
    <location>
        <position position="195"/>
    </location>
    <ligand>
        <name>NADP(+)</name>
        <dbReference type="ChEBI" id="CHEBI:58349"/>
    </ligand>
</feature>
<feature type="binding site" evidence="2">
    <location>
        <position position="197"/>
    </location>
    <ligand>
        <name>NADP(+)</name>
        <dbReference type="ChEBI" id="CHEBI:58349"/>
    </ligand>
</feature>
<feature type="binding site" evidence="2">
    <location>
        <position position="198"/>
    </location>
    <ligand>
        <name>NADP(+)</name>
        <dbReference type="ChEBI" id="CHEBI:58349"/>
    </ligand>
</feature>
<feature type="binding site" evidence="2">
    <location>
        <position position="217"/>
    </location>
    <ligand>
        <name>NADP(+)</name>
        <dbReference type="ChEBI" id="CHEBI:58349"/>
    </ligand>
</feature>
<feature type="binding site" evidence="2">
    <location>
        <position position="218"/>
    </location>
    <ligand>
        <name>NADP(+)</name>
        <dbReference type="ChEBI" id="CHEBI:58349"/>
    </ligand>
</feature>
<feature type="binding site" evidence="2">
    <location>
        <position position="219"/>
    </location>
    <ligand>
        <name>NADP(+)</name>
        <dbReference type="ChEBI" id="CHEBI:58349"/>
    </ligand>
</feature>
<feature type="binding site" evidence="2">
    <location>
        <position position="222"/>
    </location>
    <ligand>
        <name>NADP(+)</name>
        <dbReference type="ChEBI" id="CHEBI:58349"/>
    </ligand>
</feature>
<feature type="binding site" evidence="2">
    <location>
        <position position="262"/>
    </location>
    <ligand>
        <name>NADP(+)</name>
        <dbReference type="ChEBI" id="CHEBI:58349"/>
    </ligand>
</feature>
<feature type="binding site" evidence="2">
    <location>
        <position position="281"/>
    </location>
    <ligand>
        <name>NADP(+)</name>
        <dbReference type="ChEBI" id="CHEBI:58349"/>
    </ligand>
</feature>
<feature type="binding site" evidence="2">
    <location>
        <position position="283"/>
    </location>
    <ligand>
        <name>NADP(+)</name>
        <dbReference type="ChEBI" id="CHEBI:58349"/>
    </ligand>
</feature>
<feature type="binding site" evidence="2">
    <location>
        <position position="305"/>
    </location>
    <ligand>
        <name>NADP(+)</name>
        <dbReference type="ChEBI" id="CHEBI:58349"/>
    </ligand>
</feature>
<feature type="binding site" evidence="2">
    <location>
        <position position="307"/>
    </location>
    <ligand>
        <name>NADP(+)</name>
        <dbReference type="ChEBI" id="CHEBI:58349"/>
    </ligand>
</feature>
<feature type="binding site" evidence="2">
    <location>
        <position position="352"/>
    </location>
    <ligand>
        <name>NADP(+)</name>
        <dbReference type="ChEBI" id="CHEBI:58349"/>
    </ligand>
</feature>
<gene>
    <name evidence="4" type="primary">GS</name>
</gene>
<accession>P0DXJ1</accession>